<feature type="signal peptide" evidence="1">
    <location>
        <begin position="1"/>
        <end position="19"/>
    </location>
</feature>
<feature type="chain" id="PRO_0000013708" description="Uncharacterized lipoprotein YjhA">
    <location>
        <begin position="20"/>
        <end position="213"/>
    </location>
</feature>
<feature type="region of interest" description="Disordered" evidence="2">
    <location>
        <begin position="20"/>
        <end position="62"/>
    </location>
</feature>
<feature type="compositionally biased region" description="Basic and acidic residues" evidence="2">
    <location>
        <begin position="26"/>
        <end position="62"/>
    </location>
</feature>
<feature type="lipid moiety-binding region" description="N-palmitoyl cysteine" evidence="1">
    <location>
        <position position="20"/>
    </location>
</feature>
<feature type="lipid moiety-binding region" description="S-diacylglycerol cysteine" evidence="1">
    <location>
        <position position="20"/>
    </location>
</feature>
<feature type="strand" evidence="3">
    <location>
        <begin position="69"/>
        <end position="72"/>
    </location>
</feature>
<feature type="strand" evidence="3">
    <location>
        <begin position="75"/>
        <end position="85"/>
    </location>
</feature>
<feature type="strand" evidence="3">
    <location>
        <begin position="90"/>
        <end position="94"/>
    </location>
</feature>
<feature type="strand" evidence="3">
    <location>
        <begin position="108"/>
        <end position="119"/>
    </location>
</feature>
<feature type="strand" evidence="3">
    <location>
        <begin position="121"/>
        <end position="123"/>
    </location>
</feature>
<feature type="strand" evidence="3">
    <location>
        <begin position="125"/>
        <end position="128"/>
    </location>
</feature>
<feature type="helix" evidence="3">
    <location>
        <begin position="129"/>
        <end position="131"/>
    </location>
</feature>
<feature type="strand" evidence="3">
    <location>
        <begin position="132"/>
        <end position="135"/>
    </location>
</feature>
<feature type="turn" evidence="3">
    <location>
        <begin position="149"/>
        <end position="153"/>
    </location>
</feature>
<feature type="strand" evidence="3">
    <location>
        <begin position="157"/>
        <end position="160"/>
    </location>
</feature>
<feature type="strand" evidence="3">
    <location>
        <begin position="165"/>
        <end position="175"/>
    </location>
</feature>
<feature type="helix" evidence="3">
    <location>
        <begin position="179"/>
        <end position="181"/>
    </location>
</feature>
<feature type="strand" evidence="3">
    <location>
        <begin position="183"/>
        <end position="186"/>
    </location>
</feature>
<feature type="helix" evidence="3">
    <location>
        <begin position="188"/>
        <end position="191"/>
    </location>
</feature>
<feature type="helix" evidence="3">
    <location>
        <begin position="199"/>
        <end position="204"/>
    </location>
</feature>
<feature type="strand" evidence="3">
    <location>
        <begin position="208"/>
        <end position="211"/>
    </location>
</feature>
<accession>O34725</accession>
<proteinExistence type="evidence at protein level"/>
<keyword id="KW-0002">3D-structure</keyword>
<keyword id="KW-1003">Cell membrane</keyword>
<keyword id="KW-0449">Lipoprotein</keyword>
<keyword id="KW-0472">Membrane</keyword>
<keyword id="KW-0564">Palmitate</keyword>
<keyword id="KW-1185">Reference proteome</keyword>
<keyword id="KW-0732">Signal</keyword>
<protein>
    <recommendedName>
        <fullName>Uncharacterized lipoprotein YjhA</fullName>
    </recommendedName>
</protein>
<sequence length="213" mass="23978">MKKVLLLLFVLTIGLALSACSQSSDASEKEKPKEKKSQEELEKELDKELKKGGEPKTKKDDQIHKIGETFKAGHTNFTVNKVDRVQKGEYMNVGGAVNEETKTIKDDEERLIIEVTMENIGEDSISYNFIGFDLRDKNDQSVRPVFSIEEKGRILMGGTLVSGKKVTGVLSYVIPKGEQKHYTLVYNPFLADTNSSNTEERVKDDIDYLVKLD</sequence>
<dbReference type="EMBL" id="AF015825">
    <property type="protein sequence ID" value="AAC46314.1"/>
    <property type="molecule type" value="Genomic_DNA"/>
</dbReference>
<dbReference type="EMBL" id="AL009126">
    <property type="protein sequence ID" value="CAB13075.1"/>
    <property type="molecule type" value="Genomic_DNA"/>
</dbReference>
<dbReference type="PIR" id="G69850">
    <property type="entry name" value="G69850"/>
</dbReference>
<dbReference type="RefSeq" id="NP_389100.1">
    <property type="nucleotide sequence ID" value="NC_000964.3"/>
</dbReference>
<dbReference type="RefSeq" id="WP_003244850.1">
    <property type="nucleotide sequence ID" value="NZ_OZ025638.1"/>
</dbReference>
<dbReference type="PDB" id="3CFU">
    <property type="method" value="X-ray"/>
    <property type="resolution" value="2.40 A"/>
    <property type="chains" value="A/B=64-213"/>
</dbReference>
<dbReference type="PDBsum" id="3CFU"/>
<dbReference type="SMR" id="O34725"/>
<dbReference type="FunCoup" id="O34725">
    <property type="interactions" value="45"/>
</dbReference>
<dbReference type="STRING" id="224308.BSU12180"/>
<dbReference type="PaxDb" id="224308-BSU12180"/>
<dbReference type="DNASU" id="936457"/>
<dbReference type="EnsemblBacteria" id="CAB13075">
    <property type="protein sequence ID" value="CAB13075"/>
    <property type="gene ID" value="BSU_12180"/>
</dbReference>
<dbReference type="GeneID" id="936457"/>
<dbReference type="KEGG" id="bsu:BSU12180"/>
<dbReference type="PATRIC" id="fig|224308.179.peg.1316"/>
<dbReference type="InParanoid" id="O34725"/>
<dbReference type="OrthoDB" id="2934916at2"/>
<dbReference type="BioCyc" id="BSUB:BSU12180-MONOMER"/>
<dbReference type="EvolutionaryTrace" id="O34725"/>
<dbReference type="Proteomes" id="UP000001570">
    <property type="component" value="Chromosome"/>
</dbReference>
<dbReference type="GO" id="GO:0005886">
    <property type="term" value="C:plasma membrane"/>
    <property type="evidence" value="ECO:0007669"/>
    <property type="project" value="UniProtKB-SubCell"/>
</dbReference>
<dbReference type="Gene3D" id="2.60.40.1240">
    <property type="match status" value="1"/>
</dbReference>
<dbReference type="InterPro" id="IPR029051">
    <property type="entry name" value="DUF4352"/>
</dbReference>
<dbReference type="InterPro" id="IPR029050">
    <property type="entry name" value="Immunoprotect_excell_Ig-like"/>
</dbReference>
<dbReference type="Pfam" id="PF11611">
    <property type="entry name" value="DUF4352"/>
    <property type="match status" value="1"/>
</dbReference>
<dbReference type="PROSITE" id="PS51257">
    <property type="entry name" value="PROKAR_LIPOPROTEIN"/>
    <property type="match status" value="1"/>
</dbReference>
<reference key="1">
    <citation type="journal article" date="1998" name="Microbiology">
        <title>A 35.7 kb DNA fragment from the Bacillus subtilis chromosome containing a putative 12.3 kb operon involved in hexuronate catabolism and a perfectly symmetrical hypothetical catabolite-responsive element.</title>
        <authorList>
            <person name="Rivolta C."/>
            <person name="Soldo B."/>
            <person name="Lazarevic V."/>
            <person name="Joris B."/>
            <person name="Mauel C."/>
            <person name="Karamata D."/>
        </authorList>
    </citation>
    <scope>NUCLEOTIDE SEQUENCE [GENOMIC DNA]</scope>
    <source>
        <strain>168</strain>
    </source>
</reference>
<reference key="2">
    <citation type="journal article" date="1997" name="Nature">
        <title>The complete genome sequence of the Gram-positive bacterium Bacillus subtilis.</title>
        <authorList>
            <person name="Kunst F."/>
            <person name="Ogasawara N."/>
            <person name="Moszer I."/>
            <person name="Albertini A.M."/>
            <person name="Alloni G."/>
            <person name="Azevedo V."/>
            <person name="Bertero M.G."/>
            <person name="Bessieres P."/>
            <person name="Bolotin A."/>
            <person name="Borchert S."/>
            <person name="Borriss R."/>
            <person name="Boursier L."/>
            <person name="Brans A."/>
            <person name="Braun M."/>
            <person name="Brignell S.C."/>
            <person name="Bron S."/>
            <person name="Brouillet S."/>
            <person name="Bruschi C.V."/>
            <person name="Caldwell B."/>
            <person name="Capuano V."/>
            <person name="Carter N.M."/>
            <person name="Choi S.-K."/>
            <person name="Codani J.-J."/>
            <person name="Connerton I.F."/>
            <person name="Cummings N.J."/>
            <person name="Daniel R.A."/>
            <person name="Denizot F."/>
            <person name="Devine K.M."/>
            <person name="Duesterhoeft A."/>
            <person name="Ehrlich S.D."/>
            <person name="Emmerson P.T."/>
            <person name="Entian K.-D."/>
            <person name="Errington J."/>
            <person name="Fabret C."/>
            <person name="Ferrari E."/>
            <person name="Foulger D."/>
            <person name="Fritz C."/>
            <person name="Fujita M."/>
            <person name="Fujita Y."/>
            <person name="Fuma S."/>
            <person name="Galizzi A."/>
            <person name="Galleron N."/>
            <person name="Ghim S.-Y."/>
            <person name="Glaser P."/>
            <person name="Goffeau A."/>
            <person name="Golightly E.J."/>
            <person name="Grandi G."/>
            <person name="Guiseppi G."/>
            <person name="Guy B.J."/>
            <person name="Haga K."/>
            <person name="Haiech J."/>
            <person name="Harwood C.R."/>
            <person name="Henaut A."/>
            <person name="Hilbert H."/>
            <person name="Holsappel S."/>
            <person name="Hosono S."/>
            <person name="Hullo M.-F."/>
            <person name="Itaya M."/>
            <person name="Jones L.-M."/>
            <person name="Joris B."/>
            <person name="Karamata D."/>
            <person name="Kasahara Y."/>
            <person name="Klaerr-Blanchard M."/>
            <person name="Klein C."/>
            <person name="Kobayashi Y."/>
            <person name="Koetter P."/>
            <person name="Koningstein G."/>
            <person name="Krogh S."/>
            <person name="Kumano M."/>
            <person name="Kurita K."/>
            <person name="Lapidus A."/>
            <person name="Lardinois S."/>
            <person name="Lauber J."/>
            <person name="Lazarevic V."/>
            <person name="Lee S.-M."/>
            <person name="Levine A."/>
            <person name="Liu H."/>
            <person name="Masuda S."/>
            <person name="Mauel C."/>
            <person name="Medigue C."/>
            <person name="Medina N."/>
            <person name="Mellado R.P."/>
            <person name="Mizuno M."/>
            <person name="Moestl D."/>
            <person name="Nakai S."/>
            <person name="Noback M."/>
            <person name="Noone D."/>
            <person name="O'Reilly M."/>
            <person name="Ogawa K."/>
            <person name="Ogiwara A."/>
            <person name="Oudega B."/>
            <person name="Park S.-H."/>
            <person name="Parro V."/>
            <person name="Pohl T.M."/>
            <person name="Portetelle D."/>
            <person name="Porwollik S."/>
            <person name="Prescott A.M."/>
            <person name="Presecan E."/>
            <person name="Pujic P."/>
            <person name="Purnelle B."/>
            <person name="Rapoport G."/>
            <person name="Rey M."/>
            <person name="Reynolds S."/>
            <person name="Rieger M."/>
            <person name="Rivolta C."/>
            <person name="Rocha E."/>
            <person name="Roche B."/>
            <person name="Rose M."/>
            <person name="Sadaie Y."/>
            <person name="Sato T."/>
            <person name="Scanlan E."/>
            <person name="Schleich S."/>
            <person name="Schroeter R."/>
            <person name="Scoffone F."/>
            <person name="Sekiguchi J."/>
            <person name="Sekowska A."/>
            <person name="Seror S.J."/>
            <person name="Serror P."/>
            <person name="Shin B.-S."/>
            <person name="Soldo B."/>
            <person name="Sorokin A."/>
            <person name="Tacconi E."/>
            <person name="Takagi T."/>
            <person name="Takahashi H."/>
            <person name="Takemaru K."/>
            <person name="Takeuchi M."/>
            <person name="Tamakoshi A."/>
            <person name="Tanaka T."/>
            <person name="Terpstra P."/>
            <person name="Tognoni A."/>
            <person name="Tosato V."/>
            <person name="Uchiyama S."/>
            <person name="Vandenbol M."/>
            <person name="Vannier F."/>
            <person name="Vassarotti A."/>
            <person name="Viari A."/>
            <person name="Wambutt R."/>
            <person name="Wedler E."/>
            <person name="Wedler H."/>
            <person name="Weitzenegger T."/>
            <person name="Winters P."/>
            <person name="Wipat A."/>
            <person name="Yamamoto H."/>
            <person name="Yamane K."/>
            <person name="Yasumoto K."/>
            <person name="Yata K."/>
            <person name="Yoshida K."/>
            <person name="Yoshikawa H.-F."/>
            <person name="Zumstein E."/>
            <person name="Yoshikawa H."/>
            <person name="Danchin A."/>
        </authorList>
    </citation>
    <scope>NUCLEOTIDE SEQUENCE [LARGE SCALE GENOMIC DNA]</scope>
    <source>
        <strain>168</strain>
    </source>
</reference>
<reference key="3">
    <citation type="submission" date="2008-03" db="PDB data bank">
        <title>Crystal structure of the yjhA protein from Bacillus subtilis.</title>
        <authorList>
            <consortium name="Northeast structural genomics consortium (NESG)"/>
        </authorList>
    </citation>
    <scope>X-RAY CRYSTALLOGRAPHY (2.4 ANGSTROMS) OF 63-213</scope>
</reference>
<organism>
    <name type="scientific">Bacillus subtilis (strain 168)</name>
    <dbReference type="NCBI Taxonomy" id="224308"/>
    <lineage>
        <taxon>Bacteria</taxon>
        <taxon>Bacillati</taxon>
        <taxon>Bacillota</taxon>
        <taxon>Bacilli</taxon>
        <taxon>Bacillales</taxon>
        <taxon>Bacillaceae</taxon>
        <taxon>Bacillus</taxon>
    </lineage>
</organism>
<gene>
    <name type="primary">yjhA</name>
    <name type="ordered locus">BSU12180</name>
</gene>
<name>YJHA_BACSU</name>
<evidence type="ECO:0000255" key="1">
    <source>
        <dbReference type="PROSITE-ProRule" id="PRU00303"/>
    </source>
</evidence>
<evidence type="ECO:0000256" key="2">
    <source>
        <dbReference type="SAM" id="MobiDB-lite"/>
    </source>
</evidence>
<evidence type="ECO:0007829" key="3">
    <source>
        <dbReference type="PDB" id="3CFU"/>
    </source>
</evidence>
<comment type="subcellular location">
    <subcellularLocation>
        <location evidence="1">Cell membrane</location>
        <topology evidence="1">Lipid-anchor</topology>
    </subcellularLocation>
</comment>